<comment type="function">
    <text evidence="1">Catalyzes the formation of 5-methyl-uridine at position 1939 (m5U1939) in 23S rRNA.</text>
</comment>
<comment type="catalytic activity">
    <reaction evidence="1">
        <text>uridine(1939) in 23S rRNA + S-adenosyl-L-methionine = 5-methyluridine(1939) in 23S rRNA + S-adenosyl-L-homocysteine + H(+)</text>
        <dbReference type="Rhea" id="RHEA:42908"/>
        <dbReference type="Rhea" id="RHEA-COMP:10278"/>
        <dbReference type="Rhea" id="RHEA-COMP:10279"/>
        <dbReference type="ChEBI" id="CHEBI:15378"/>
        <dbReference type="ChEBI" id="CHEBI:57856"/>
        <dbReference type="ChEBI" id="CHEBI:59789"/>
        <dbReference type="ChEBI" id="CHEBI:65315"/>
        <dbReference type="ChEBI" id="CHEBI:74447"/>
        <dbReference type="EC" id="2.1.1.190"/>
    </reaction>
</comment>
<comment type="similarity">
    <text evidence="1">Belongs to the class I-like SAM-binding methyltransferase superfamily. RNA M5U methyltransferase family. RlmD subfamily.</text>
</comment>
<accession>Q2L016</accession>
<dbReference type="EC" id="2.1.1.190" evidence="1"/>
<dbReference type="EMBL" id="AM167904">
    <property type="protein sequence ID" value="CAJ49585.1"/>
    <property type="molecule type" value="Genomic_DNA"/>
</dbReference>
<dbReference type="RefSeq" id="WP_012417642.1">
    <property type="nucleotide sequence ID" value="NC_010645.1"/>
</dbReference>
<dbReference type="SMR" id="Q2L016"/>
<dbReference type="STRING" id="360910.BAV1976"/>
<dbReference type="KEGG" id="bav:BAV1976"/>
<dbReference type="eggNOG" id="COG2265">
    <property type="taxonomic scope" value="Bacteria"/>
</dbReference>
<dbReference type="HOGENOM" id="CLU_014689_8_2_4"/>
<dbReference type="OrthoDB" id="9804590at2"/>
<dbReference type="Proteomes" id="UP000001977">
    <property type="component" value="Chromosome"/>
</dbReference>
<dbReference type="GO" id="GO:0051539">
    <property type="term" value="F:4 iron, 4 sulfur cluster binding"/>
    <property type="evidence" value="ECO:0007669"/>
    <property type="project" value="UniProtKB-KW"/>
</dbReference>
<dbReference type="GO" id="GO:0005506">
    <property type="term" value="F:iron ion binding"/>
    <property type="evidence" value="ECO:0007669"/>
    <property type="project" value="UniProtKB-UniRule"/>
</dbReference>
<dbReference type="GO" id="GO:0003723">
    <property type="term" value="F:RNA binding"/>
    <property type="evidence" value="ECO:0007669"/>
    <property type="project" value="InterPro"/>
</dbReference>
<dbReference type="GO" id="GO:0070041">
    <property type="term" value="F:rRNA (uridine-C5-)-methyltransferase activity"/>
    <property type="evidence" value="ECO:0007669"/>
    <property type="project" value="UniProtKB-UniRule"/>
</dbReference>
<dbReference type="GO" id="GO:0070475">
    <property type="term" value="P:rRNA base methylation"/>
    <property type="evidence" value="ECO:0007669"/>
    <property type="project" value="TreeGrafter"/>
</dbReference>
<dbReference type="CDD" id="cd02440">
    <property type="entry name" value="AdoMet_MTases"/>
    <property type="match status" value="1"/>
</dbReference>
<dbReference type="FunFam" id="2.40.50.140:FF:000097">
    <property type="entry name" value="23S rRNA (uracil(1939)-C(5))-methyltransferase RlmD"/>
    <property type="match status" value="1"/>
</dbReference>
<dbReference type="Gene3D" id="2.40.50.1070">
    <property type="match status" value="1"/>
</dbReference>
<dbReference type="Gene3D" id="2.40.50.140">
    <property type="entry name" value="Nucleic acid-binding proteins"/>
    <property type="match status" value="1"/>
</dbReference>
<dbReference type="Gene3D" id="3.40.50.150">
    <property type="entry name" value="Vaccinia Virus protein VP39"/>
    <property type="match status" value="1"/>
</dbReference>
<dbReference type="HAMAP" id="MF_01010">
    <property type="entry name" value="23SrRNA_methyltr_RlmD"/>
    <property type="match status" value="1"/>
</dbReference>
<dbReference type="InterPro" id="IPR001566">
    <property type="entry name" value="23S_rRNA_MeTrfase_RlmD"/>
</dbReference>
<dbReference type="InterPro" id="IPR030390">
    <property type="entry name" value="MeTrfase_TrmA_AS"/>
</dbReference>
<dbReference type="InterPro" id="IPR030391">
    <property type="entry name" value="MeTrfase_TrmA_CS"/>
</dbReference>
<dbReference type="InterPro" id="IPR012340">
    <property type="entry name" value="NA-bd_OB-fold"/>
</dbReference>
<dbReference type="InterPro" id="IPR029063">
    <property type="entry name" value="SAM-dependent_MTases_sf"/>
</dbReference>
<dbReference type="InterPro" id="IPR002792">
    <property type="entry name" value="TRAM_dom"/>
</dbReference>
<dbReference type="InterPro" id="IPR010280">
    <property type="entry name" value="U5_MeTrfase_fam"/>
</dbReference>
<dbReference type="NCBIfam" id="NF009639">
    <property type="entry name" value="PRK13168.1"/>
    <property type="match status" value="1"/>
</dbReference>
<dbReference type="NCBIfam" id="TIGR00479">
    <property type="entry name" value="rumA"/>
    <property type="match status" value="1"/>
</dbReference>
<dbReference type="PANTHER" id="PTHR11061:SF49">
    <property type="entry name" value="23S RRNA (URACIL(1939)-C(5))-METHYLTRANSFERASE RLMD"/>
    <property type="match status" value="1"/>
</dbReference>
<dbReference type="PANTHER" id="PTHR11061">
    <property type="entry name" value="RNA M5U METHYLTRANSFERASE"/>
    <property type="match status" value="1"/>
</dbReference>
<dbReference type="Pfam" id="PF01938">
    <property type="entry name" value="TRAM"/>
    <property type="match status" value="1"/>
</dbReference>
<dbReference type="Pfam" id="PF05958">
    <property type="entry name" value="tRNA_U5-meth_tr"/>
    <property type="match status" value="1"/>
</dbReference>
<dbReference type="SUPFAM" id="SSF50249">
    <property type="entry name" value="Nucleic acid-binding proteins"/>
    <property type="match status" value="1"/>
</dbReference>
<dbReference type="SUPFAM" id="SSF53335">
    <property type="entry name" value="S-adenosyl-L-methionine-dependent methyltransferases"/>
    <property type="match status" value="1"/>
</dbReference>
<dbReference type="PROSITE" id="PS51687">
    <property type="entry name" value="SAM_MT_RNA_M5U"/>
    <property type="match status" value="1"/>
</dbReference>
<dbReference type="PROSITE" id="PS50926">
    <property type="entry name" value="TRAM"/>
    <property type="match status" value="1"/>
</dbReference>
<dbReference type="PROSITE" id="PS01230">
    <property type="entry name" value="TRMA_1"/>
    <property type="match status" value="1"/>
</dbReference>
<dbReference type="PROSITE" id="PS01231">
    <property type="entry name" value="TRMA_2"/>
    <property type="match status" value="1"/>
</dbReference>
<organism>
    <name type="scientific">Bordetella avium (strain 197N)</name>
    <dbReference type="NCBI Taxonomy" id="360910"/>
    <lineage>
        <taxon>Bacteria</taxon>
        <taxon>Pseudomonadati</taxon>
        <taxon>Pseudomonadota</taxon>
        <taxon>Betaproteobacteria</taxon>
        <taxon>Burkholderiales</taxon>
        <taxon>Alcaligenaceae</taxon>
        <taxon>Bordetella</taxon>
    </lineage>
</organism>
<proteinExistence type="inferred from homology"/>
<gene>
    <name evidence="1" type="primary">rlmD</name>
    <name type="synonym">rumA</name>
    <name type="ordered locus">BAV1976</name>
</gene>
<evidence type="ECO:0000255" key="1">
    <source>
        <dbReference type="HAMAP-Rule" id="MF_01010"/>
    </source>
</evidence>
<feature type="chain" id="PRO_0000282030" description="23S rRNA (uracil(1939)-C(5))-methyltransferase RlmD">
    <location>
        <begin position="1"/>
        <end position="476"/>
    </location>
</feature>
<feature type="domain" description="TRAM" evidence="1">
    <location>
        <begin position="1"/>
        <end position="55"/>
    </location>
</feature>
<feature type="active site" description="Nucleophile" evidence="1">
    <location>
        <position position="394"/>
    </location>
</feature>
<feature type="binding site" evidence="1">
    <location>
        <position position="68"/>
    </location>
    <ligand>
        <name>[4Fe-4S] cluster</name>
        <dbReference type="ChEBI" id="CHEBI:49883"/>
    </ligand>
</feature>
<feature type="binding site" evidence="1">
    <location>
        <position position="74"/>
    </location>
    <ligand>
        <name>[4Fe-4S] cluster</name>
        <dbReference type="ChEBI" id="CHEBI:49883"/>
    </ligand>
</feature>
<feature type="binding site" evidence="1">
    <location>
        <position position="77"/>
    </location>
    <ligand>
        <name>[4Fe-4S] cluster</name>
        <dbReference type="ChEBI" id="CHEBI:49883"/>
    </ligand>
</feature>
<feature type="binding site" evidence="1">
    <location>
        <position position="156"/>
    </location>
    <ligand>
        <name>[4Fe-4S] cluster</name>
        <dbReference type="ChEBI" id="CHEBI:49883"/>
    </ligand>
</feature>
<feature type="binding site" evidence="1">
    <location>
        <position position="265"/>
    </location>
    <ligand>
        <name>S-adenosyl-L-methionine</name>
        <dbReference type="ChEBI" id="CHEBI:59789"/>
    </ligand>
</feature>
<feature type="binding site" evidence="1">
    <location>
        <position position="294"/>
    </location>
    <ligand>
        <name>S-adenosyl-L-methionine</name>
        <dbReference type="ChEBI" id="CHEBI:59789"/>
    </ligand>
</feature>
<feature type="binding site" evidence="1">
    <location>
        <position position="299"/>
    </location>
    <ligand>
        <name>S-adenosyl-L-methionine</name>
        <dbReference type="ChEBI" id="CHEBI:59789"/>
    </ligand>
</feature>
<feature type="binding site" evidence="1">
    <location>
        <position position="315"/>
    </location>
    <ligand>
        <name>S-adenosyl-L-methionine</name>
        <dbReference type="ChEBI" id="CHEBI:59789"/>
    </ligand>
</feature>
<feature type="binding site" evidence="1">
    <location>
        <position position="343"/>
    </location>
    <ligand>
        <name>S-adenosyl-L-methionine</name>
        <dbReference type="ChEBI" id="CHEBI:59789"/>
    </ligand>
</feature>
<feature type="binding site" evidence="1">
    <location>
        <position position="364"/>
    </location>
    <ligand>
        <name>S-adenosyl-L-methionine</name>
        <dbReference type="ChEBI" id="CHEBI:59789"/>
    </ligand>
</feature>
<name>RLMD_BORA1</name>
<keyword id="KW-0004">4Fe-4S</keyword>
<keyword id="KW-0408">Iron</keyword>
<keyword id="KW-0411">Iron-sulfur</keyword>
<keyword id="KW-0479">Metal-binding</keyword>
<keyword id="KW-0489">Methyltransferase</keyword>
<keyword id="KW-1185">Reference proteome</keyword>
<keyword id="KW-0698">rRNA processing</keyword>
<keyword id="KW-0949">S-adenosyl-L-methionine</keyword>
<keyword id="KW-0808">Transferase</keyword>
<protein>
    <recommendedName>
        <fullName evidence="1">23S rRNA (uracil(1939)-C(5))-methyltransferase RlmD</fullName>
        <ecNumber evidence="1">2.1.1.190</ecNumber>
    </recommendedName>
    <alternativeName>
        <fullName evidence="1">23S rRNA(m5U1939)-methyltransferase</fullName>
    </alternativeName>
</protein>
<reference key="1">
    <citation type="journal article" date="2006" name="J. Bacteriol.">
        <title>Comparison of the genome sequence of the poultry pathogen Bordetella avium with those of B. bronchiseptica, B. pertussis, and B. parapertussis reveals extensive diversity in surface structures associated with host interaction.</title>
        <authorList>
            <person name="Sebaihia M."/>
            <person name="Preston A."/>
            <person name="Maskell D.J."/>
            <person name="Kuzmiak H."/>
            <person name="Connell T.D."/>
            <person name="King N.D."/>
            <person name="Orndorff P.E."/>
            <person name="Miyamoto D.M."/>
            <person name="Thomson N.R."/>
            <person name="Harris D."/>
            <person name="Goble A."/>
            <person name="Lord A."/>
            <person name="Murphy L."/>
            <person name="Quail M.A."/>
            <person name="Rutter S."/>
            <person name="Squares R."/>
            <person name="Squares S."/>
            <person name="Woodward J."/>
            <person name="Parkhill J."/>
            <person name="Temple L.M."/>
        </authorList>
    </citation>
    <scope>NUCLEOTIDE SEQUENCE [LARGE SCALE GENOMIC DNA]</scope>
    <source>
        <strain>197N</strain>
    </source>
</reference>
<sequence length="476" mass="52584">MVDEVLKIESLDLEARGIARRDGKVVFVEGALPGERVYAATVRRKPSYEIARVETVLTPSSQRVEPRCPHFGVCGGCAMQHLEPTSQVAIKQRALEDTFWHVGKIRPQRVLPPLHGPTWGYRYRARLSVRVVPKKGGVLVGFHERKSSYVADMRECHVLPRHVSDLLLPLRAMIAALSRPERIPQIEVALGEGVTALVLRHIEPLNDHDITVLRDFAARHNVQWWLQSKGPDTVHPLDPAHGDTLAYTMPEFGLRMPYRPTDFTQVNHAINRSMVSRALKLLEVQPTDRVADLFCGLGNFTLPLATQGREAVGVEGSKALTDRALEAAARHGLEGRTRFATLNLFEVDVSWLRGLGYFDRMLIDPPREGAHAVAQALSQLTPAERPRRIVYVSCNPATLARDAAIMVHEGGYVLKAAGVINMFPHTGHVESIAVFESLADDEVLHVQQQARLKAELAAQEAAEATVQAGAASEQPA</sequence>